<feature type="chain" id="PRO_0000131995" description="Cytidylate kinase">
    <location>
        <begin position="1"/>
        <end position="224"/>
    </location>
</feature>
<feature type="binding site" evidence="1">
    <location>
        <begin position="12"/>
        <end position="20"/>
    </location>
    <ligand>
        <name>ATP</name>
        <dbReference type="ChEBI" id="CHEBI:30616"/>
    </ligand>
</feature>
<protein>
    <recommendedName>
        <fullName evidence="1">Cytidylate kinase</fullName>
        <shortName evidence="1">CK</shortName>
        <ecNumber evidence="1">2.7.4.25</ecNumber>
    </recommendedName>
    <alternativeName>
        <fullName evidence="1">Cytidine monophosphate kinase</fullName>
        <shortName evidence="1">CMP kinase</shortName>
    </alternativeName>
</protein>
<sequence length="224" mass="25193">MINLTVKIAIDGPAGAGKSTVAKKLAKLLGFTYIDTGAMYRAITLKVLRENISLEDEERIVEVARKSDISLDGERVFLDGEDVSEEIRKPIISQKVSVVSQIPEVREILVKKQRKIAEGKNVVMDGRDIGTVVLPDAQFKFFLTASLEERARRRYEELKNKGTEVKYEEVLEEIKKRDSLDSGRKTSPLTIPEGAILIDTTDLTEEEVVERVYEAIRKNTKGEI</sequence>
<proteinExistence type="inferred from homology"/>
<comment type="catalytic activity">
    <reaction evidence="1">
        <text>CMP + ATP = CDP + ADP</text>
        <dbReference type="Rhea" id="RHEA:11600"/>
        <dbReference type="ChEBI" id="CHEBI:30616"/>
        <dbReference type="ChEBI" id="CHEBI:58069"/>
        <dbReference type="ChEBI" id="CHEBI:60377"/>
        <dbReference type="ChEBI" id="CHEBI:456216"/>
        <dbReference type="EC" id="2.7.4.25"/>
    </reaction>
</comment>
<comment type="catalytic activity">
    <reaction evidence="1">
        <text>dCMP + ATP = dCDP + ADP</text>
        <dbReference type="Rhea" id="RHEA:25094"/>
        <dbReference type="ChEBI" id="CHEBI:30616"/>
        <dbReference type="ChEBI" id="CHEBI:57566"/>
        <dbReference type="ChEBI" id="CHEBI:58593"/>
        <dbReference type="ChEBI" id="CHEBI:456216"/>
        <dbReference type="EC" id="2.7.4.25"/>
    </reaction>
</comment>
<comment type="subcellular location">
    <subcellularLocation>
        <location evidence="1">Cytoplasm</location>
    </subcellularLocation>
</comment>
<comment type="similarity">
    <text evidence="1">Belongs to the cytidylate kinase family. Type 1 subfamily.</text>
</comment>
<reference key="1">
    <citation type="journal article" date="2002" name="Genome Res.">
        <title>A complete sequence of the T. tengcongensis genome.</title>
        <authorList>
            <person name="Bao Q."/>
            <person name="Tian Y."/>
            <person name="Li W."/>
            <person name="Xu Z."/>
            <person name="Xuan Z."/>
            <person name="Hu S."/>
            <person name="Dong W."/>
            <person name="Yang J."/>
            <person name="Chen Y."/>
            <person name="Xue Y."/>
            <person name="Xu Y."/>
            <person name="Lai X."/>
            <person name="Huang L."/>
            <person name="Dong X."/>
            <person name="Ma Y."/>
            <person name="Ling L."/>
            <person name="Tan H."/>
            <person name="Chen R."/>
            <person name="Wang J."/>
            <person name="Yu J."/>
            <person name="Yang H."/>
        </authorList>
    </citation>
    <scope>NUCLEOTIDE SEQUENCE [LARGE SCALE GENOMIC DNA]</scope>
    <source>
        <strain>DSM 15242 / JCM 11007 / NBRC 100824 / MB4</strain>
    </source>
</reference>
<gene>
    <name evidence="1" type="primary">cmk</name>
    <name type="ordered locus">TTE1350</name>
</gene>
<accession>Q8RA78</accession>
<keyword id="KW-0067">ATP-binding</keyword>
<keyword id="KW-0963">Cytoplasm</keyword>
<keyword id="KW-0418">Kinase</keyword>
<keyword id="KW-0547">Nucleotide-binding</keyword>
<keyword id="KW-1185">Reference proteome</keyword>
<keyword id="KW-0808">Transferase</keyword>
<evidence type="ECO:0000255" key="1">
    <source>
        <dbReference type="HAMAP-Rule" id="MF_00238"/>
    </source>
</evidence>
<dbReference type="EC" id="2.7.4.25" evidence="1"/>
<dbReference type="EMBL" id="AE008691">
    <property type="protein sequence ID" value="AAM24572.1"/>
    <property type="molecule type" value="Genomic_DNA"/>
</dbReference>
<dbReference type="SMR" id="Q8RA78"/>
<dbReference type="STRING" id="273068.TTE1350"/>
<dbReference type="KEGG" id="tte:TTE1350"/>
<dbReference type="eggNOG" id="COG0283">
    <property type="taxonomic scope" value="Bacteria"/>
</dbReference>
<dbReference type="HOGENOM" id="CLU_079959_0_2_9"/>
<dbReference type="Proteomes" id="UP000000555">
    <property type="component" value="Chromosome"/>
</dbReference>
<dbReference type="GO" id="GO:0005829">
    <property type="term" value="C:cytosol"/>
    <property type="evidence" value="ECO:0007669"/>
    <property type="project" value="TreeGrafter"/>
</dbReference>
<dbReference type="GO" id="GO:0005524">
    <property type="term" value="F:ATP binding"/>
    <property type="evidence" value="ECO:0007669"/>
    <property type="project" value="UniProtKB-UniRule"/>
</dbReference>
<dbReference type="GO" id="GO:0036430">
    <property type="term" value="F:CMP kinase activity"/>
    <property type="evidence" value="ECO:0007669"/>
    <property type="project" value="RHEA"/>
</dbReference>
<dbReference type="GO" id="GO:0036431">
    <property type="term" value="F:dCMP kinase activity"/>
    <property type="evidence" value="ECO:0007669"/>
    <property type="project" value="RHEA"/>
</dbReference>
<dbReference type="GO" id="GO:0015949">
    <property type="term" value="P:nucleobase-containing small molecule interconversion"/>
    <property type="evidence" value="ECO:0007669"/>
    <property type="project" value="TreeGrafter"/>
</dbReference>
<dbReference type="GO" id="GO:0006220">
    <property type="term" value="P:pyrimidine nucleotide metabolic process"/>
    <property type="evidence" value="ECO:0007669"/>
    <property type="project" value="UniProtKB-UniRule"/>
</dbReference>
<dbReference type="CDD" id="cd02020">
    <property type="entry name" value="CMPK"/>
    <property type="match status" value="1"/>
</dbReference>
<dbReference type="Gene3D" id="3.40.50.300">
    <property type="entry name" value="P-loop containing nucleotide triphosphate hydrolases"/>
    <property type="match status" value="1"/>
</dbReference>
<dbReference type="HAMAP" id="MF_00238">
    <property type="entry name" value="Cytidyl_kinase_type1"/>
    <property type="match status" value="1"/>
</dbReference>
<dbReference type="InterPro" id="IPR003136">
    <property type="entry name" value="Cytidylate_kin"/>
</dbReference>
<dbReference type="InterPro" id="IPR011994">
    <property type="entry name" value="Cytidylate_kinase_dom"/>
</dbReference>
<dbReference type="InterPro" id="IPR027417">
    <property type="entry name" value="P-loop_NTPase"/>
</dbReference>
<dbReference type="NCBIfam" id="TIGR00017">
    <property type="entry name" value="cmk"/>
    <property type="match status" value="1"/>
</dbReference>
<dbReference type="PANTHER" id="PTHR21299:SF2">
    <property type="entry name" value="CYTIDYLATE KINASE"/>
    <property type="match status" value="1"/>
</dbReference>
<dbReference type="PANTHER" id="PTHR21299">
    <property type="entry name" value="CYTIDYLATE KINASE/PANTOATE-BETA-ALANINE LIGASE"/>
    <property type="match status" value="1"/>
</dbReference>
<dbReference type="Pfam" id="PF02224">
    <property type="entry name" value="Cytidylate_kin"/>
    <property type="match status" value="1"/>
</dbReference>
<dbReference type="SUPFAM" id="SSF52540">
    <property type="entry name" value="P-loop containing nucleoside triphosphate hydrolases"/>
    <property type="match status" value="1"/>
</dbReference>
<organism>
    <name type="scientific">Caldanaerobacter subterraneus subsp. tengcongensis (strain DSM 15242 / JCM 11007 / NBRC 100824 / MB4)</name>
    <name type="common">Thermoanaerobacter tengcongensis</name>
    <dbReference type="NCBI Taxonomy" id="273068"/>
    <lineage>
        <taxon>Bacteria</taxon>
        <taxon>Bacillati</taxon>
        <taxon>Bacillota</taxon>
        <taxon>Clostridia</taxon>
        <taxon>Thermoanaerobacterales</taxon>
        <taxon>Thermoanaerobacteraceae</taxon>
        <taxon>Caldanaerobacter</taxon>
    </lineage>
</organism>
<name>KCY_CALS4</name>